<keyword id="KW-0007">Acetylation</keyword>
<keyword id="KW-0339">Growth factor</keyword>
<keyword id="KW-0597">Phosphoprotein</keyword>
<keyword id="KW-1185">Reference proteome</keyword>
<name>GMFB_PONAB</name>
<feature type="initiator methionine" description="Removed" evidence="2">
    <location>
        <position position="1"/>
    </location>
</feature>
<feature type="chain" id="PRO_0000214945" description="Glia maturation factor beta">
    <location>
        <begin position="2"/>
        <end position="142"/>
    </location>
</feature>
<feature type="domain" description="ADF-H" evidence="3">
    <location>
        <begin position="4"/>
        <end position="139"/>
    </location>
</feature>
<feature type="modified residue" description="N-acetylserine" evidence="2">
    <location>
        <position position="2"/>
    </location>
</feature>
<organism>
    <name type="scientific">Pongo abelii</name>
    <name type="common">Sumatran orangutan</name>
    <name type="synonym">Pongo pygmaeus abelii</name>
    <dbReference type="NCBI Taxonomy" id="9601"/>
    <lineage>
        <taxon>Eukaryota</taxon>
        <taxon>Metazoa</taxon>
        <taxon>Chordata</taxon>
        <taxon>Craniata</taxon>
        <taxon>Vertebrata</taxon>
        <taxon>Euteleostomi</taxon>
        <taxon>Mammalia</taxon>
        <taxon>Eutheria</taxon>
        <taxon>Euarchontoglires</taxon>
        <taxon>Primates</taxon>
        <taxon>Haplorrhini</taxon>
        <taxon>Catarrhini</taxon>
        <taxon>Hominidae</taxon>
        <taxon>Pongo</taxon>
    </lineage>
</organism>
<accession>Q5R6P6</accession>
<protein>
    <recommendedName>
        <fullName>Glia maturation factor beta</fullName>
        <shortName>GMF-beta</shortName>
    </recommendedName>
</protein>
<comment type="function">
    <text evidence="1">This protein causes differentiation of brain cells, stimulation of neural regeneration, and inhibition of proliferation of tumor cells.</text>
</comment>
<comment type="PTM">
    <text evidence="1">Phosphorylated; stimulated by phorbol ester.</text>
</comment>
<comment type="similarity">
    <text evidence="4">Belongs to the actin-binding proteins ADF family. GMF subfamily.</text>
</comment>
<proteinExistence type="evidence at transcript level"/>
<reference key="1">
    <citation type="submission" date="2004-11" db="EMBL/GenBank/DDBJ databases">
        <authorList>
            <consortium name="The German cDNA consortium"/>
        </authorList>
    </citation>
    <scope>NUCLEOTIDE SEQUENCE [LARGE SCALE MRNA]</scope>
    <source>
        <tissue>Brain cortex</tissue>
    </source>
</reference>
<sequence>MSESLVVCDVAEDLVEKLRKFRFRKETNNAAIIMKIDKDKRLVVLDEELEGISPDELKDELPERQPRFIVYSYKYQHDDGRVSYPLCFIFSSPVGCKPEQQMMYAGSKNKLVQTAELTKVFEIRNTEDLTEEWLREKLGFFH</sequence>
<gene>
    <name type="primary">GMFB</name>
</gene>
<evidence type="ECO:0000250" key="1"/>
<evidence type="ECO:0000250" key="2">
    <source>
        <dbReference type="UniProtKB" id="P60984"/>
    </source>
</evidence>
<evidence type="ECO:0000255" key="3">
    <source>
        <dbReference type="PROSITE-ProRule" id="PRU00599"/>
    </source>
</evidence>
<evidence type="ECO:0000305" key="4"/>
<dbReference type="EMBL" id="CR860440">
    <property type="protein sequence ID" value="CAH92564.1"/>
    <property type="molecule type" value="mRNA"/>
</dbReference>
<dbReference type="RefSeq" id="NP_001126503.1">
    <property type="nucleotide sequence ID" value="NM_001133031.2"/>
</dbReference>
<dbReference type="SMR" id="Q5R6P6"/>
<dbReference type="FunCoup" id="Q5R6P6">
    <property type="interactions" value="788"/>
</dbReference>
<dbReference type="STRING" id="9601.ENSPPYP00000006624"/>
<dbReference type="Ensembl" id="ENSPPYT00000006887.3">
    <property type="protein sequence ID" value="ENSPPYP00000006624.3"/>
    <property type="gene ID" value="ENSPPYG00000005830.3"/>
</dbReference>
<dbReference type="GeneID" id="100173491"/>
<dbReference type="KEGG" id="pon:100173491"/>
<dbReference type="CTD" id="2764"/>
<dbReference type="eggNOG" id="KOG1736">
    <property type="taxonomic scope" value="Eukaryota"/>
</dbReference>
<dbReference type="GeneTree" id="ENSGT00390000008920"/>
<dbReference type="HOGENOM" id="CLU_087056_1_0_1"/>
<dbReference type="InParanoid" id="Q5R6P6"/>
<dbReference type="OMA" id="EWKMLYA"/>
<dbReference type="OrthoDB" id="3919494at2759"/>
<dbReference type="Proteomes" id="UP000001595">
    <property type="component" value="Chromosome 14"/>
</dbReference>
<dbReference type="GO" id="GO:0030864">
    <property type="term" value="C:cortical actin cytoskeleton"/>
    <property type="evidence" value="ECO:0007669"/>
    <property type="project" value="TreeGrafter"/>
</dbReference>
<dbReference type="GO" id="GO:0003779">
    <property type="term" value="F:actin binding"/>
    <property type="evidence" value="ECO:0007669"/>
    <property type="project" value="InterPro"/>
</dbReference>
<dbReference type="GO" id="GO:0071933">
    <property type="term" value="F:Arp2/3 complex binding"/>
    <property type="evidence" value="ECO:0007669"/>
    <property type="project" value="InterPro"/>
</dbReference>
<dbReference type="GO" id="GO:0008083">
    <property type="term" value="F:growth factor activity"/>
    <property type="evidence" value="ECO:0007669"/>
    <property type="project" value="UniProtKB-KW"/>
</dbReference>
<dbReference type="GO" id="GO:0071846">
    <property type="term" value="P:actin filament debranching"/>
    <property type="evidence" value="ECO:0007669"/>
    <property type="project" value="InterPro"/>
</dbReference>
<dbReference type="GO" id="GO:0007612">
    <property type="term" value="P:learning"/>
    <property type="evidence" value="ECO:0007669"/>
    <property type="project" value="Ensembl"/>
</dbReference>
<dbReference type="GO" id="GO:0007626">
    <property type="term" value="P:locomotory behavior"/>
    <property type="evidence" value="ECO:0007669"/>
    <property type="project" value="Ensembl"/>
</dbReference>
<dbReference type="GO" id="GO:0034316">
    <property type="term" value="P:negative regulation of Arp2/3 complex-mediated actin nucleation"/>
    <property type="evidence" value="ECO:0007669"/>
    <property type="project" value="TreeGrafter"/>
</dbReference>
<dbReference type="CDD" id="cd11283">
    <property type="entry name" value="ADF_GMF-beta_like"/>
    <property type="match status" value="1"/>
</dbReference>
<dbReference type="FunFam" id="3.40.20.10:FF:000024">
    <property type="entry name" value="Glia maturation factor"/>
    <property type="match status" value="1"/>
</dbReference>
<dbReference type="Gene3D" id="3.40.20.10">
    <property type="entry name" value="Severin"/>
    <property type="match status" value="1"/>
</dbReference>
<dbReference type="InterPro" id="IPR002108">
    <property type="entry name" value="ADF-H"/>
</dbReference>
<dbReference type="InterPro" id="IPR029006">
    <property type="entry name" value="ADF-H/Gelsolin-like_dom_sf"/>
</dbReference>
<dbReference type="InterPro" id="IPR011171">
    <property type="entry name" value="GMF"/>
</dbReference>
<dbReference type="PANTHER" id="PTHR11249:SF3">
    <property type="entry name" value="GLIA MATURATION FACTOR BETA"/>
    <property type="match status" value="1"/>
</dbReference>
<dbReference type="PANTHER" id="PTHR11249">
    <property type="entry name" value="GLIAL FACTOR NATURATION FACTOR"/>
    <property type="match status" value="1"/>
</dbReference>
<dbReference type="Pfam" id="PF00241">
    <property type="entry name" value="Cofilin_ADF"/>
    <property type="match status" value="1"/>
</dbReference>
<dbReference type="PIRSF" id="PIRSF001788">
    <property type="entry name" value="GMF-beta"/>
    <property type="match status" value="1"/>
</dbReference>
<dbReference type="SMART" id="SM00102">
    <property type="entry name" value="ADF"/>
    <property type="match status" value="1"/>
</dbReference>
<dbReference type="SUPFAM" id="SSF55753">
    <property type="entry name" value="Actin depolymerizing proteins"/>
    <property type="match status" value="1"/>
</dbReference>
<dbReference type="PROSITE" id="PS51263">
    <property type="entry name" value="ADF_H"/>
    <property type="match status" value="1"/>
</dbReference>